<name>RL25_TREDE</name>
<sequence length="211" mass="23243">MEQRLLNANERSTYGKNAAVKMRKAGRIPAVMYDRHGKSVPIDVDEREFMKLFKLVTESTIVTLNAAGKDYEVFIKDFQHDIVSDKIKHIDFYEVERGKTLRTKVKIRLEGSPEGVRHGGILETGITELELECLPKDLPARIIVDVSALDVNQSLHVRDIKLPEAVTVLTSDDITVAAIKFAAAESTTPAATEGEETEAAAAAPEPAAEDK</sequence>
<proteinExistence type="inferred from homology"/>
<reference key="1">
    <citation type="journal article" date="2004" name="Proc. Natl. Acad. Sci. U.S.A.">
        <title>Comparison of the genome of the oral pathogen Treponema denticola with other spirochete genomes.</title>
        <authorList>
            <person name="Seshadri R."/>
            <person name="Myers G.S.A."/>
            <person name="Tettelin H."/>
            <person name="Eisen J.A."/>
            <person name="Heidelberg J.F."/>
            <person name="Dodson R.J."/>
            <person name="Davidsen T.M."/>
            <person name="DeBoy R.T."/>
            <person name="Fouts D.E."/>
            <person name="Haft D.H."/>
            <person name="Selengut J."/>
            <person name="Ren Q."/>
            <person name="Brinkac L.M."/>
            <person name="Madupu R."/>
            <person name="Kolonay J.F."/>
            <person name="Durkin S.A."/>
            <person name="Daugherty S.C."/>
            <person name="Shetty J."/>
            <person name="Shvartsbeyn A."/>
            <person name="Gebregeorgis E."/>
            <person name="Geer K."/>
            <person name="Tsegaye G."/>
            <person name="Malek J.A."/>
            <person name="Ayodeji B."/>
            <person name="Shatsman S."/>
            <person name="McLeod M.P."/>
            <person name="Smajs D."/>
            <person name="Howell J.K."/>
            <person name="Pal S."/>
            <person name="Amin A."/>
            <person name="Vashisth P."/>
            <person name="McNeill T.Z."/>
            <person name="Xiang Q."/>
            <person name="Sodergren E."/>
            <person name="Baca E."/>
            <person name="Weinstock G.M."/>
            <person name="Norris S.J."/>
            <person name="Fraser C.M."/>
            <person name="Paulsen I.T."/>
        </authorList>
    </citation>
    <scope>NUCLEOTIDE SEQUENCE [LARGE SCALE GENOMIC DNA]</scope>
    <source>
        <strain>ATCC 35405 / DSM 14222 / CIP 103919 / JCM 8153 / KCTC 15104</strain>
    </source>
</reference>
<evidence type="ECO:0000255" key="1">
    <source>
        <dbReference type="HAMAP-Rule" id="MF_01334"/>
    </source>
</evidence>
<evidence type="ECO:0000256" key="2">
    <source>
        <dbReference type="SAM" id="MobiDB-lite"/>
    </source>
</evidence>
<evidence type="ECO:0000305" key="3"/>
<gene>
    <name evidence="1" type="primary">rplY</name>
    <name evidence="1" type="synonym">ctc</name>
    <name type="ordered locus">TDE_1340</name>
</gene>
<feature type="chain" id="PRO_0000181611" description="Large ribosomal subunit protein bL25">
    <location>
        <begin position="1"/>
        <end position="211"/>
    </location>
</feature>
<feature type="region of interest" description="Disordered" evidence="2">
    <location>
        <begin position="185"/>
        <end position="211"/>
    </location>
</feature>
<feature type="compositionally biased region" description="Low complexity" evidence="2">
    <location>
        <begin position="199"/>
        <end position="211"/>
    </location>
</feature>
<comment type="function">
    <text evidence="1">This is one of the proteins that binds to the 5S RNA in the ribosome where it forms part of the central protuberance.</text>
</comment>
<comment type="subunit">
    <text evidence="1">Part of the 50S ribosomal subunit; part of the 5S rRNA/L5/L18/L25 subcomplex. Contacts the 5S rRNA. Binds to the 5S rRNA independently of L5 and L18.</text>
</comment>
<comment type="similarity">
    <text evidence="1">Belongs to the bacterial ribosomal protein bL25 family. CTC subfamily.</text>
</comment>
<organism>
    <name type="scientific">Treponema denticola (strain ATCC 35405 / DSM 14222 / CIP 103919 / JCM 8153 / KCTC 15104)</name>
    <dbReference type="NCBI Taxonomy" id="243275"/>
    <lineage>
        <taxon>Bacteria</taxon>
        <taxon>Pseudomonadati</taxon>
        <taxon>Spirochaetota</taxon>
        <taxon>Spirochaetia</taxon>
        <taxon>Spirochaetales</taxon>
        <taxon>Treponemataceae</taxon>
        <taxon>Treponema</taxon>
    </lineage>
</organism>
<protein>
    <recommendedName>
        <fullName evidence="1">Large ribosomal subunit protein bL25</fullName>
    </recommendedName>
    <alternativeName>
        <fullName evidence="3">50S ribosomal protein L25</fullName>
    </alternativeName>
    <alternativeName>
        <fullName evidence="1">General stress protein CTC</fullName>
    </alternativeName>
</protein>
<dbReference type="EMBL" id="AE017226">
    <property type="protein sequence ID" value="AAS11857.1"/>
    <property type="molecule type" value="Genomic_DNA"/>
</dbReference>
<dbReference type="RefSeq" id="NP_971946.1">
    <property type="nucleotide sequence ID" value="NC_002967.9"/>
</dbReference>
<dbReference type="RefSeq" id="WP_002678895.1">
    <property type="nucleotide sequence ID" value="NC_002967.9"/>
</dbReference>
<dbReference type="SMR" id="Q73N16"/>
<dbReference type="STRING" id="243275.TDE_1340"/>
<dbReference type="PaxDb" id="243275-TDE_1340"/>
<dbReference type="GeneID" id="2741074"/>
<dbReference type="KEGG" id="tde:TDE_1340"/>
<dbReference type="PATRIC" id="fig|243275.7.peg.1288"/>
<dbReference type="eggNOG" id="COG1825">
    <property type="taxonomic scope" value="Bacteria"/>
</dbReference>
<dbReference type="HOGENOM" id="CLU_075939_2_1_12"/>
<dbReference type="OrthoDB" id="9790002at2"/>
<dbReference type="Proteomes" id="UP000008212">
    <property type="component" value="Chromosome"/>
</dbReference>
<dbReference type="GO" id="GO:0022625">
    <property type="term" value="C:cytosolic large ribosomal subunit"/>
    <property type="evidence" value="ECO:0007669"/>
    <property type="project" value="TreeGrafter"/>
</dbReference>
<dbReference type="GO" id="GO:0008097">
    <property type="term" value="F:5S rRNA binding"/>
    <property type="evidence" value="ECO:0007669"/>
    <property type="project" value="InterPro"/>
</dbReference>
<dbReference type="GO" id="GO:0003735">
    <property type="term" value="F:structural constituent of ribosome"/>
    <property type="evidence" value="ECO:0007669"/>
    <property type="project" value="InterPro"/>
</dbReference>
<dbReference type="GO" id="GO:0006412">
    <property type="term" value="P:translation"/>
    <property type="evidence" value="ECO:0007669"/>
    <property type="project" value="UniProtKB-UniRule"/>
</dbReference>
<dbReference type="CDD" id="cd00495">
    <property type="entry name" value="Ribosomal_L25_TL5_CTC"/>
    <property type="match status" value="1"/>
</dbReference>
<dbReference type="Gene3D" id="2.170.120.20">
    <property type="entry name" value="Ribosomal protein L25, beta domain"/>
    <property type="match status" value="1"/>
</dbReference>
<dbReference type="Gene3D" id="2.40.240.10">
    <property type="entry name" value="Ribosomal Protein L25, Chain P"/>
    <property type="match status" value="1"/>
</dbReference>
<dbReference type="HAMAP" id="MF_01334">
    <property type="entry name" value="Ribosomal_bL25_CTC"/>
    <property type="match status" value="1"/>
</dbReference>
<dbReference type="InterPro" id="IPR020056">
    <property type="entry name" value="Rbsml_bL25/Gln-tRNA_synth_N"/>
</dbReference>
<dbReference type="InterPro" id="IPR011035">
    <property type="entry name" value="Ribosomal_bL25/Gln-tRNA_synth"/>
</dbReference>
<dbReference type="InterPro" id="IPR020057">
    <property type="entry name" value="Ribosomal_bL25_b-dom"/>
</dbReference>
<dbReference type="InterPro" id="IPR037121">
    <property type="entry name" value="Ribosomal_bL25_C"/>
</dbReference>
<dbReference type="InterPro" id="IPR001021">
    <property type="entry name" value="Ribosomal_bL25_long"/>
</dbReference>
<dbReference type="InterPro" id="IPR029751">
    <property type="entry name" value="Ribosomal_L25_dom"/>
</dbReference>
<dbReference type="InterPro" id="IPR020930">
    <property type="entry name" value="Ribosomal_uL5_bac-type"/>
</dbReference>
<dbReference type="NCBIfam" id="TIGR00731">
    <property type="entry name" value="bL25_bact_ctc"/>
    <property type="match status" value="1"/>
</dbReference>
<dbReference type="PANTHER" id="PTHR33284">
    <property type="entry name" value="RIBOSOMAL PROTEIN L25/GLN-TRNA SYNTHETASE, ANTI-CODON-BINDING DOMAIN-CONTAINING PROTEIN"/>
    <property type="match status" value="1"/>
</dbReference>
<dbReference type="PANTHER" id="PTHR33284:SF1">
    <property type="entry name" value="RIBOSOMAL PROTEIN L25_GLN-TRNA SYNTHETASE, ANTI-CODON-BINDING DOMAIN-CONTAINING PROTEIN"/>
    <property type="match status" value="1"/>
</dbReference>
<dbReference type="Pfam" id="PF01386">
    <property type="entry name" value="Ribosomal_L25p"/>
    <property type="match status" value="1"/>
</dbReference>
<dbReference type="Pfam" id="PF14693">
    <property type="entry name" value="Ribosomal_TL5_C"/>
    <property type="match status" value="1"/>
</dbReference>
<dbReference type="SUPFAM" id="SSF50715">
    <property type="entry name" value="Ribosomal protein L25-like"/>
    <property type="match status" value="1"/>
</dbReference>
<accession>Q73N16</accession>
<keyword id="KW-1185">Reference proteome</keyword>
<keyword id="KW-0687">Ribonucleoprotein</keyword>
<keyword id="KW-0689">Ribosomal protein</keyword>
<keyword id="KW-0694">RNA-binding</keyword>
<keyword id="KW-0699">rRNA-binding</keyword>